<evidence type="ECO:0000255" key="1">
    <source>
        <dbReference type="HAMAP-Rule" id="MF_00524"/>
    </source>
</evidence>
<feature type="chain" id="PRO_0000215127" description="Glucokinase">
    <location>
        <begin position="1"/>
        <end position="321"/>
    </location>
</feature>
<feature type="binding site" evidence="1">
    <location>
        <begin position="8"/>
        <end position="13"/>
    </location>
    <ligand>
        <name>ATP</name>
        <dbReference type="ChEBI" id="CHEBI:30616"/>
    </ligand>
</feature>
<keyword id="KW-0067">ATP-binding</keyword>
<keyword id="KW-0963">Cytoplasm</keyword>
<keyword id="KW-0324">Glycolysis</keyword>
<keyword id="KW-0418">Kinase</keyword>
<keyword id="KW-0547">Nucleotide-binding</keyword>
<keyword id="KW-1185">Reference proteome</keyword>
<keyword id="KW-0808">Transferase</keyword>
<protein>
    <recommendedName>
        <fullName evidence="1">Glucokinase</fullName>
        <ecNumber evidence="1">2.7.1.2</ecNumber>
    </recommendedName>
    <alternativeName>
        <fullName evidence="1">Glucose kinase</fullName>
    </alternativeName>
</protein>
<gene>
    <name evidence="1" type="primary">glk</name>
    <name type="ordered locus">ECA1401</name>
</gene>
<comment type="catalytic activity">
    <reaction evidence="1">
        <text>D-glucose + ATP = D-glucose 6-phosphate + ADP + H(+)</text>
        <dbReference type="Rhea" id="RHEA:17825"/>
        <dbReference type="ChEBI" id="CHEBI:4167"/>
        <dbReference type="ChEBI" id="CHEBI:15378"/>
        <dbReference type="ChEBI" id="CHEBI:30616"/>
        <dbReference type="ChEBI" id="CHEBI:61548"/>
        <dbReference type="ChEBI" id="CHEBI:456216"/>
        <dbReference type="EC" id="2.7.1.2"/>
    </reaction>
</comment>
<comment type="subcellular location">
    <subcellularLocation>
        <location evidence="1">Cytoplasm</location>
    </subcellularLocation>
</comment>
<comment type="similarity">
    <text evidence="1">Belongs to the bacterial glucokinase family.</text>
</comment>
<accession>Q6D7C4</accession>
<sequence length="321" mass="34427">MTHFVLVGDVGGTNTRLALCDAMTGELSQIETYSGLDFPSLEGAIRDYLDSRQVTVQDACIAIACPITGDWVAMTNHTWAFSIAEMKASLGLRHFEVINDFTAVSMAVPVMGRESLLQFGGGEPVPGKPVAVYGAGTGLGVAHLVHVANQWVSLPGEGGHVDFAANSDEEDNILTILRQSLGHVSAERLLSGQGLVNIYRAIVLSDDRTPEALEPKDITERAVNNTDVDCRRALSLFCVIMGRFGGNLALNLGTFGGVYIAGGIVPRFLEFFKASGFRAAFEDKGRFKGYMQDIPVYLITHEQPGLMGAGAYLRQVLGSAL</sequence>
<reference key="1">
    <citation type="journal article" date="2004" name="Proc. Natl. Acad. Sci. U.S.A.">
        <title>Genome sequence of the enterobacterial phytopathogen Erwinia carotovora subsp. atroseptica and characterization of virulence factors.</title>
        <authorList>
            <person name="Bell K.S."/>
            <person name="Sebaihia M."/>
            <person name="Pritchard L."/>
            <person name="Holden M.T.G."/>
            <person name="Hyman L.J."/>
            <person name="Holeva M.C."/>
            <person name="Thomson N.R."/>
            <person name="Bentley S.D."/>
            <person name="Churcher L.J.C."/>
            <person name="Mungall K."/>
            <person name="Atkin R."/>
            <person name="Bason N."/>
            <person name="Brooks K."/>
            <person name="Chillingworth T."/>
            <person name="Clark K."/>
            <person name="Doggett J."/>
            <person name="Fraser A."/>
            <person name="Hance Z."/>
            <person name="Hauser H."/>
            <person name="Jagels K."/>
            <person name="Moule S."/>
            <person name="Norbertczak H."/>
            <person name="Ormond D."/>
            <person name="Price C."/>
            <person name="Quail M.A."/>
            <person name="Sanders M."/>
            <person name="Walker D."/>
            <person name="Whitehead S."/>
            <person name="Salmond G.P.C."/>
            <person name="Birch P.R.J."/>
            <person name="Parkhill J."/>
            <person name="Toth I.K."/>
        </authorList>
    </citation>
    <scope>NUCLEOTIDE SEQUENCE [LARGE SCALE GENOMIC DNA]</scope>
    <source>
        <strain>SCRI 1043 / ATCC BAA-672</strain>
    </source>
</reference>
<organism>
    <name type="scientific">Pectobacterium atrosepticum (strain SCRI 1043 / ATCC BAA-672)</name>
    <name type="common">Erwinia carotovora subsp. atroseptica</name>
    <dbReference type="NCBI Taxonomy" id="218491"/>
    <lineage>
        <taxon>Bacteria</taxon>
        <taxon>Pseudomonadati</taxon>
        <taxon>Pseudomonadota</taxon>
        <taxon>Gammaproteobacteria</taxon>
        <taxon>Enterobacterales</taxon>
        <taxon>Pectobacteriaceae</taxon>
        <taxon>Pectobacterium</taxon>
    </lineage>
</organism>
<name>GLK_PECAS</name>
<proteinExistence type="inferred from homology"/>
<dbReference type="EC" id="2.7.1.2" evidence="1"/>
<dbReference type="EMBL" id="BX950851">
    <property type="protein sequence ID" value="CAG74311.1"/>
    <property type="molecule type" value="Genomic_DNA"/>
</dbReference>
<dbReference type="RefSeq" id="WP_011092986.1">
    <property type="nucleotide sequence ID" value="NC_004547.2"/>
</dbReference>
<dbReference type="SMR" id="Q6D7C4"/>
<dbReference type="STRING" id="218491.ECA1401"/>
<dbReference type="KEGG" id="eca:ECA1401"/>
<dbReference type="PATRIC" id="fig|218491.5.peg.1437"/>
<dbReference type="eggNOG" id="COG0837">
    <property type="taxonomic scope" value="Bacteria"/>
</dbReference>
<dbReference type="HOGENOM" id="CLU_042582_1_0_6"/>
<dbReference type="OrthoDB" id="9800595at2"/>
<dbReference type="Proteomes" id="UP000007966">
    <property type="component" value="Chromosome"/>
</dbReference>
<dbReference type="GO" id="GO:0005829">
    <property type="term" value="C:cytosol"/>
    <property type="evidence" value="ECO:0007669"/>
    <property type="project" value="TreeGrafter"/>
</dbReference>
<dbReference type="GO" id="GO:0005524">
    <property type="term" value="F:ATP binding"/>
    <property type="evidence" value="ECO:0007669"/>
    <property type="project" value="UniProtKB-UniRule"/>
</dbReference>
<dbReference type="GO" id="GO:0005536">
    <property type="term" value="F:D-glucose binding"/>
    <property type="evidence" value="ECO:0007669"/>
    <property type="project" value="InterPro"/>
</dbReference>
<dbReference type="GO" id="GO:0004340">
    <property type="term" value="F:glucokinase activity"/>
    <property type="evidence" value="ECO:0007669"/>
    <property type="project" value="UniProtKB-UniRule"/>
</dbReference>
<dbReference type="GO" id="GO:0006096">
    <property type="term" value="P:glycolytic process"/>
    <property type="evidence" value="ECO:0007669"/>
    <property type="project" value="UniProtKB-UniRule"/>
</dbReference>
<dbReference type="CDD" id="cd24008">
    <property type="entry name" value="ASKHA_NBD_GLK"/>
    <property type="match status" value="1"/>
</dbReference>
<dbReference type="FunFam" id="3.30.420.40:FF:000045">
    <property type="entry name" value="Glucokinase"/>
    <property type="match status" value="1"/>
</dbReference>
<dbReference type="FunFam" id="3.40.367.20:FF:000002">
    <property type="entry name" value="Glucokinase"/>
    <property type="match status" value="1"/>
</dbReference>
<dbReference type="Gene3D" id="3.30.420.40">
    <property type="match status" value="1"/>
</dbReference>
<dbReference type="Gene3D" id="3.40.367.20">
    <property type="match status" value="1"/>
</dbReference>
<dbReference type="HAMAP" id="MF_00524">
    <property type="entry name" value="Glucokinase"/>
    <property type="match status" value="1"/>
</dbReference>
<dbReference type="InterPro" id="IPR043129">
    <property type="entry name" value="ATPase_NBD"/>
</dbReference>
<dbReference type="InterPro" id="IPR050201">
    <property type="entry name" value="Bacterial_glucokinase"/>
</dbReference>
<dbReference type="InterPro" id="IPR003836">
    <property type="entry name" value="Glucokinase"/>
</dbReference>
<dbReference type="NCBIfam" id="TIGR00749">
    <property type="entry name" value="glk"/>
    <property type="match status" value="1"/>
</dbReference>
<dbReference type="NCBIfam" id="NF001414">
    <property type="entry name" value="PRK00292.1-1"/>
    <property type="match status" value="1"/>
</dbReference>
<dbReference type="NCBIfam" id="NF001416">
    <property type="entry name" value="PRK00292.1-3"/>
    <property type="match status" value="1"/>
</dbReference>
<dbReference type="PANTHER" id="PTHR47690">
    <property type="entry name" value="GLUCOKINASE"/>
    <property type="match status" value="1"/>
</dbReference>
<dbReference type="PANTHER" id="PTHR47690:SF1">
    <property type="entry name" value="GLUCOKINASE"/>
    <property type="match status" value="1"/>
</dbReference>
<dbReference type="Pfam" id="PF02685">
    <property type="entry name" value="Glucokinase"/>
    <property type="match status" value="1"/>
</dbReference>
<dbReference type="SUPFAM" id="SSF53067">
    <property type="entry name" value="Actin-like ATPase domain"/>
    <property type="match status" value="1"/>
</dbReference>